<proteinExistence type="inferred from homology"/>
<comment type="function">
    <text evidence="1">Specifically methylates guanosine-37 in various tRNAs.</text>
</comment>
<comment type="catalytic activity">
    <reaction evidence="1">
        <text>guanosine(37) in tRNA + S-adenosyl-L-methionine = N(1)-methylguanosine(37) in tRNA + S-adenosyl-L-homocysteine + H(+)</text>
        <dbReference type="Rhea" id="RHEA:36899"/>
        <dbReference type="Rhea" id="RHEA-COMP:10145"/>
        <dbReference type="Rhea" id="RHEA-COMP:10147"/>
        <dbReference type="ChEBI" id="CHEBI:15378"/>
        <dbReference type="ChEBI" id="CHEBI:57856"/>
        <dbReference type="ChEBI" id="CHEBI:59789"/>
        <dbReference type="ChEBI" id="CHEBI:73542"/>
        <dbReference type="ChEBI" id="CHEBI:74269"/>
        <dbReference type="EC" id="2.1.1.228"/>
    </reaction>
</comment>
<comment type="subunit">
    <text evidence="1">Homodimer.</text>
</comment>
<comment type="subcellular location">
    <subcellularLocation>
        <location evidence="1">Cytoplasm</location>
    </subcellularLocation>
</comment>
<comment type="similarity">
    <text evidence="1">Belongs to the RNA methyltransferase TrmD family.</text>
</comment>
<keyword id="KW-0963">Cytoplasm</keyword>
<keyword id="KW-0489">Methyltransferase</keyword>
<keyword id="KW-1185">Reference proteome</keyword>
<keyword id="KW-0949">S-adenosyl-L-methionine</keyword>
<keyword id="KW-0808">Transferase</keyword>
<keyword id="KW-0819">tRNA processing</keyword>
<gene>
    <name evidence="1" type="primary">trmD</name>
    <name type="ordered locus">Acel_1558</name>
</gene>
<accession>A0LV70</accession>
<name>TRMD_ACIC1</name>
<protein>
    <recommendedName>
        <fullName evidence="1">tRNA (guanine-N(1)-)-methyltransferase</fullName>
        <ecNumber evidence="1">2.1.1.228</ecNumber>
    </recommendedName>
    <alternativeName>
        <fullName evidence="1">M1G-methyltransferase</fullName>
    </alternativeName>
    <alternativeName>
        <fullName evidence="1">tRNA [GM37] methyltransferase</fullName>
    </alternativeName>
</protein>
<sequence length="286" mass="30687">MHVDIVSIFPEYFRPLELSLIGKARARGVLDVHLWDLRDFTHDPHRTVDDTPYGGGPGMVMRPEPWGETLDAVRAEAARLGVDAPLLIVPTPAGELLTQRAAERYAAEPWLAFACGRYEGIDERVLLDARRHMRVEEVSIGDYVLAGGEAATLVIVEAVARLLPGVVGNQASVLDDSHAQGLLEGPAYTKPAVWRGLEVPEVLLSGNHAAIARWRREQAIRRTAVRRPELLDALPPGSLTPHEEALAAEARLHAGRSAETPPPAGAAGSQAEGPPGTSPSDAAVAH</sequence>
<evidence type="ECO:0000255" key="1">
    <source>
        <dbReference type="HAMAP-Rule" id="MF_00605"/>
    </source>
</evidence>
<evidence type="ECO:0000256" key="2">
    <source>
        <dbReference type="SAM" id="MobiDB-lite"/>
    </source>
</evidence>
<reference key="1">
    <citation type="journal article" date="2009" name="Genome Res.">
        <title>Complete genome of the cellulolytic thermophile Acidothermus cellulolyticus 11B provides insights into its ecophysiological and evolutionary adaptations.</title>
        <authorList>
            <person name="Barabote R.D."/>
            <person name="Xie G."/>
            <person name="Leu D.H."/>
            <person name="Normand P."/>
            <person name="Necsulea A."/>
            <person name="Daubin V."/>
            <person name="Medigue C."/>
            <person name="Adney W.S."/>
            <person name="Xu X.C."/>
            <person name="Lapidus A."/>
            <person name="Parales R.E."/>
            <person name="Detter C."/>
            <person name="Pujic P."/>
            <person name="Bruce D."/>
            <person name="Lavire C."/>
            <person name="Challacombe J.F."/>
            <person name="Brettin T.S."/>
            <person name="Berry A.M."/>
        </authorList>
    </citation>
    <scope>NUCLEOTIDE SEQUENCE [LARGE SCALE GENOMIC DNA]</scope>
    <source>
        <strain>ATCC 43068 / DSM 8971 / 11B</strain>
    </source>
</reference>
<dbReference type="EC" id="2.1.1.228" evidence="1"/>
<dbReference type="EMBL" id="CP000481">
    <property type="protein sequence ID" value="ABK53330.1"/>
    <property type="molecule type" value="Genomic_DNA"/>
</dbReference>
<dbReference type="RefSeq" id="WP_011720393.1">
    <property type="nucleotide sequence ID" value="NC_008578.1"/>
</dbReference>
<dbReference type="SMR" id="A0LV70"/>
<dbReference type="FunCoup" id="A0LV70">
    <property type="interactions" value="128"/>
</dbReference>
<dbReference type="STRING" id="351607.Acel_1558"/>
<dbReference type="KEGG" id="ace:Acel_1558"/>
<dbReference type="eggNOG" id="COG0336">
    <property type="taxonomic scope" value="Bacteria"/>
</dbReference>
<dbReference type="HOGENOM" id="CLU_047363_0_0_11"/>
<dbReference type="InParanoid" id="A0LV70"/>
<dbReference type="OrthoDB" id="9807416at2"/>
<dbReference type="Proteomes" id="UP000008221">
    <property type="component" value="Chromosome"/>
</dbReference>
<dbReference type="GO" id="GO:0005829">
    <property type="term" value="C:cytosol"/>
    <property type="evidence" value="ECO:0007669"/>
    <property type="project" value="TreeGrafter"/>
</dbReference>
<dbReference type="GO" id="GO:0052906">
    <property type="term" value="F:tRNA (guanine(37)-N1)-methyltransferase activity"/>
    <property type="evidence" value="ECO:0007669"/>
    <property type="project" value="UniProtKB-UniRule"/>
</dbReference>
<dbReference type="GO" id="GO:0002939">
    <property type="term" value="P:tRNA N1-guanine methylation"/>
    <property type="evidence" value="ECO:0007669"/>
    <property type="project" value="TreeGrafter"/>
</dbReference>
<dbReference type="CDD" id="cd18080">
    <property type="entry name" value="TrmD-like"/>
    <property type="match status" value="1"/>
</dbReference>
<dbReference type="FunFam" id="3.40.1280.10:FF:000001">
    <property type="entry name" value="tRNA (guanine-N(1)-)-methyltransferase"/>
    <property type="match status" value="1"/>
</dbReference>
<dbReference type="Gene3D" id="3.40.1280.10">
    <property type="match status" value="1"/>
</dbReference>
<dbReference type="Gene3D" id="1.10.1270.20">
    <property type="entry name" value="tRNA(m1g37)methyltransferase, domain 2"/>
    <property type="match status" value="1"/>
</dbReference>
<dbReference type="HAMAP" id="MF_00605">
    <property type="entry name" value="TrmD"/>
    <property type="match status" value="1"/>
</dbReference>
<dbReference type="InterPro" id="IPR029028">
    <property type="entry name" value="Alpha/beta_knot_MTases"/>
</dbReference>
<dbReference type="InterPro" id="IPR023148">
    <property type="entry name" value="tRNA_m1G_MeTrfase_C_sf"/>
</dbReference>
<dbReference type="InterPro" id="IPR002649">
    <property type="entry name" value="tRNA_m1G_MeTrfase_TrmD"/>
</dbReference>
<dbReference type="InterPro" id="IPR029026">
    <property type="entry name" value="tRNA_m1G_MTases_N"/>
</dbReference>
<dbReference type="InterPro" id="IPR016009">
    <property type="entry name" value="tRNA_MeTrfase_TRMD/TRM10"/>
</dbReference>
<dbReference type="NCBIfam" id="NF000648">
    <property type="entry name" value="PRK00026.1"/>
    <property type="match status" value="1"/>
</dbReference>
<dbReference type="NCBIfam" id="TIGR00088">
    <property type="entry name" value="trmD"/>
    <property type="match status" value="1"/>
</dbReference>
<dbReference type="PANTHER" id="PTHR46417">
    <property type="entry name" value="TRNA (GUANINE-N(1)-)-METHYLTRANSFERASE"/>
    <property type="match status" value="1"/>
</dbReference>
<dbReference type="PANTHER" id="PTHR46417:SF1">
    <property type="entry name" value="TRNA (GUANINE-N(1)-)-METHYLTRANSFERASE"/>
    <property type="match status" value="1"/>
</dbReference>
<dbReference type="Pfam" id="PF01746">
    <property type="entry name" value="tRNA_m1G_MT"/>
    <property type="match status" value="1"/>
</dbReference>
<dbReference type="PIRSF" id="PIRSF000386">
    <property type="entry name" value="tRNA_mtase"/>
    <property type="match status" value="1"/>
</dbReference>
<dbReference type="SUPFAM" id="SSF75217">
    <property type="entry name" value="alpha/beta knot"/>
    <property type="match status" value="1"/>
</dbReference>
<feature type="chain" id="PRO_1000006442" description="tRNA (guanine-N(1)-)-methyltransferase">
    <location>
        <begin position="1"/>
        <end position="286"/>
    </location>
</feature>
<feature type="region of interest" description="Disordered" evidence="2">
    <location>
        <begin position="232"/>
        <end position="286"/>
    </location>
</feature>
<feature type="binding site" evidence="1">
    <location>
        <position position="116"/>
    </location>
    <ligand>
        <name>S-adenosyl-L-methionine</name>
        <dbReference type="ChEBI" id="CHEBI:59789"/>
    </ligand>
</feature>
<feature type="binding site" evidence="1">
    <location>
        <begin position="140"/>
        <end position="145"/>
    </location>
    <ligand>
        <name>S-adenosyl-L-methionine</name>
        <dbReference type="ChEBI" id="CHEBI:59789"/>
    </ligand>
</feature>
<organism>
    <name type="scientific">Acidothermus cellulolyticus (strain ATCC 43068 / DSM 8971 / 11B)</name>
    <dbReference type="NCBI Taxonomy" id="351607"/>
    <lineage>
        <taxon>Bacteria</taxon>
        <taxon>Bacillati</taxon>
        <taxon>Actinomycetota</taxon>
        <taxon>Actinomycetes</taxon>
        <taxon>Acidothermales</taxon>
        <taxon>Acidothermaceae</taxon>
        <taxon>Acidothermus</taxon>
    </lineage>
</organism>